<keyword id="KW-0067">ATP-binding</keyword>
<keyword id="KW-0436">Ligase</keyword>
<keyword id="KW-0547">Nucleotide-binding</keyword>
<keyword id="KW-0648">Protein biosynthesis</keyword>
<accession>A8FMB2</accession>
<sequence>MITLKEALKYSKEELENLKKELNEKAKKEKKIGAYIEQFLDKDLSVSGEGVPVAIKDNISVKGWELTSASKILQGYIAPYDASVIVNLKANGFSPFGRCNMDEFAMGSSTASSYYGKTLNPLNFERVPGGSSGGSAAAVAGGLALASLGSDTGGSVRQPAAFCGCVGFKPSYGRVSRYGLASYSSSLDQIGVLTQNVEDAAILYDAIAGYDKMDSTSANIEFIKTAPNLNVNKKLKIAVIENYVNDADSEVKNALLKTIDMLKANGHEIVYKNLLDSKFDIAAYYIIATAEASANLSRYDGVRYGKRSENIQNLKEMYVNTRSEGFGEEVKRRILLGTFVLSSGYYDAYYIKAQKARAFIKAKYEEILQDCDLIFMPVTPTTAFKFDTQKSPMQTYLEDVYTISVNLAGLGGISVPVAKDKEELNISAQLICKAYDEQTLLDGALSLEQMIKH</sequence>
<name>GATA_CAMJ8</name>
<protein>
    <recommendedName>
        <fullName evidence="1">Glutamyl-tRNA(Gln) amidotransferase subunit A</fullName>
        <shortName evidence="1">Glu-ADT subunit A</shortName>
        <ecNumber evidence="1">6.3.5.7</ecNumber>
    </recommendedName>
</protein>
<organism>
    <name type="scientific">Campylobacter jejuni subsp. jejuni serotype O:6 (strain 81116 / NCTC 11828)</name>
    <dbReference type="NCBI Taxonomy" id="407148"/>
    <lineage>
        <taxon>Bacteria</taxon>
        <taxon>Pseudomonadati</taxon>
        <taxon>Campylobacterota</taxon>
        <taxon>Epsilonproteobacteria</taxon>
        <taxon>Campylobacterales</taxon>
        <taxon>Campylobacteraceae</taxon>
        <taxon>Campylobacter</taxon>
    </lineage>
</organism>
<reference key="1">
    <citation type="journal article" date="2007" name="J. Bacteriol.">
        <title>The complete genome sequence of Campylobacter jejuni strain 81116 (NCTC11828).</title>
        <authorList>
            <person name="Pearson B.M."/>
            <person name="Gaskin D.J.H."/>
            <person name="Segers R.P.A.M."/>
            <person name="Wells J.M."/>
            <person name="Nuijten P.J.M."/>
            <person name="van Vliet A.H.M."/>
        </authorList>
    </citation>
    <scope>NUCLEOTIDE SEQUENCE [LARGE SCALE GENOMIC DNA]</scope>
    <source>
        <strain>81116 / NCTC 11828</strain>
    </source>
</reference>
<evidence type="ECO:0000255" key="1">
    <source>
        <dbReference type="HAMAP-Rule" id="MF_00120"/>
    </source>
</evidence>
<comment type="function">
    <text evidence="1">Allows the formation of correctly charged Gln-tRNA(Gln) through the transamidation of misacylated Glu-tRNA(Gln) in organisms which lack glutaminyl-tRNA synthetase. The reaction takes place in the presence of glutamine and ATP through an activated gamma-phospho-Glu-tRNA(Gln).</text>
</comment>
<comment type="catalytic activity">
    <reaction evidence="1">
        <text>L-glutamyl-tRNA(Gln) + L-glutamine + ATP + H2O = L-glutaminyl-tRNA(Gln) + L-glutamate + ADP + phosphate + H(+)</text>
        <dbReference type="Rhea" id="RHEA:17521"/>
        <dbReference type="Rhea" id="RHEA-COMP:9681"/>
        <dbReference type="Rhea" id="RHEA-COMP:9684"/>
        <dbReference type="ChEBI" id="CHEBI:15377"/>
        <dbReference type="ChEBI" id="CHEBI:15378"/>
        <dbReference type="ChEBI" id="CHEBI:29985"/>
        <dbReference type="ChEBI" id="CHEBI:30616"/>
        <dbReference type="ChEBI" id="CHEBI:43474"/>
        <dbReference type="ChEBI" id="CHEBI:58359"/>
        <dbReference type="ChEBI" id="CHEBI:78520"/>
        <dbReference type="ChEBI" id="CHEBI:78521"/>
        <dbReference type="ChEBI" id="CHEBI:456216"/>
        <dbReference type="EC" id="6.3.5.7"/>
    </reaction>
</comment>
<comment type="subunit">
    <text evidence="1">Heterotrimer of A, B and C subunits.</text>
</comment>
<comment type="similarity">
    <text evidence="1">Belongs to the amidase family. GatA subfamily.</text>
</comment>
<gene>
    <name evidence="1" type="primary">gatA</name>
    <name type="ordered locus">C8J_1000</name>
</gene>
<feature type="chain" id="PRO_1000071366" description="Glutamyl-tRNA(Gln) amidotransferase subunit A">
    <location>
        <begin position="1"/>
        <end position="453"/>
    </location>
</feature>
<feature type="active site" description="Charge relay system" evidence="1">
    <location>
        <position position="56"/>
    </location>
</feature>
<feature type="active site" description="Charge relay system" evidence="1">
    <location>
        <position position="131"/>
    </location>
</feature>
<feature type="active site" description="Acyl-ester intermediate" evidence="1">
    <location>
        <position position="155"/>
    </location>
</feature>
<dbReference type="EC" id="6.3.5.7" evidence="1"/>
<dbReference type="EMBL" id="CP000814">
    <property type="protein sequence ID" value="ABV52599.1"/>
    <property type="molecule type" value="Genomic_DNA"/>
</dbReference>
<dbReference type="RefSeq" id="WP_012006722.1">
    <property type="nucleotide sequence ID" value="NC_009839.1"/>
</dbReference>
<dbReference type="SMR" id="A8FMB2"/>
<dbReference type="KEGG" id="cju:C8J_1000"/>
<dbReference type="HOGENOM" id="CLU_009600_0_3_7"/>
<dbReference type="GO" id="GO:0030956">
    <property type="term" value="C:glutamyl-tRNA(Gln) amidotransferase complex"/>
    <property type="evidence" value="ECO:0007669"/>
    <property type="project" value="InterPro"/>
</dbReference>
<dbReference type="GO" id="GO:0005524">
    <property type="term" value="F:ATP binding"/>
    <property type="evidence" value="ECO:0007669"/>
    <property type="project" value="UniProtKB-KW"/>
</dbReference>
<dbReference type="GO" id="GO:0050567">
    <property type="term" value="F:glutaminyl-tRNA synthase (glutamine-hydrolyzing) activity"/>
    <property type="evidence" value="ECO:0007669"/>
    <property type="project" value="UniProtKB-UniRule"/>
</dbReference>
<dbReference type="GO" id="GO:0006412">
    <property type="term" value="P:translation"/>
    <property type="evidence" value="ECO:0007669"/>
    <property type="project" value="UniProtKB-UniRule"/>
</dbReference>
<dbReference type="Gene3D" id="3.90.1300.10">
    <property type="entry name" value="Amidase signature (AS) domain"/>
    <property type="match status" value="1"/>
</dbReference>
<dbReference type="HAMAP" id="MF_00120">
    <property type="entry name" value="GatA"/>
    <property type="match status" value="1"/>
</dbReference>
<dbReference type="InterPro" id="IPR000120">
    <property type="entry name" value="Amidase"/>
</dbReference>
<dbReference type="InterPro" id="IPR020556">
    <property type="entry name" value="Amidase_CS"/>
</dbReference>
<dbReference type="InterPro" id="IPR023631">
    <property type="entry name" value="Amidase_dom"/>
</dbReference>
<dbReference type="InterPro" id="IPR036928">
    <property type="entry name" value="AS_sf"/>
</dbReference>
<dbReference type="InterPro" id="IPR004412">
    <property type="entry name" value="GatA"/>
</dbReference>
<dbReference type="NCBIfam" id="TIGR00132">
    <property type="entry name" value="gatA"/>
    <property type="match status" value="1"/>
</dbReference>
<dbReference type="PANTHER" id="PTHR11895:SF151">
    <property type="entry name" value="GLUTAMYL-TRNA(GLN) AMIDOTRANSFERASE SUBUNIT A"/>
    <property type="match status" value="1"/>
</dbReference>
<dbReference type="PANTHER" id="PTHR11895">
    <property type="entry name" value="TRANSAMIDASE"/>
    <property type="match status" value="1"/>
</dbReference>
<dbReference type="Pfam" id="PF01425">
    <property type="entry name" value="Amidase"/>
    <property type="match status" value="1"/>
</dbReference>
<dbReference type="SUPFAM" id="SSF75304">
    <property type="entry name" value="Amidase signature (AS) enzymes"/>
    <property type="match status" value="1"/>
</dbReference>
<dbReference type="PROSITE" id="PS00571">
    <property type="entry name" value="AMIDASES"/>
    <property type="match status" value="1"/>
</dbReference>
<proteinExistence type="inferred from homology"/>